<keyword id="KW-0028">Amino-acid biosynthesis</keyword>
<keyword id="KW-0055">Arginine biosynthesis</keyword>
<keyword id="KW-0067">ATP-binding</keyword>
<keyword id="KW-0963">Cytoplasm</keyword>
<keyword id="KW-0418">Kinase</keyword>
<keyword id="KW-0547">Nucleotide-binding</keyword>
<keyword id="KW-0808">Transferase</keyword>
<name>ARGB_BIFLD</name>
<evidence type="ECO:0000255" key="1">
    <source>
        <dbReference type="HAMAP-Rule" id="MF_00082"/>
    </source>
</evidence>
<comment type="function">
    <text evidence="1">Catalyzes the ATP-dependent phosphorylation of N-acetyl-L-glutamate.</text>
</comment>
<comment type="catalytic activity">
    <reaction evidence="1">
        <text>N-acetyl-L-glutamate + ATP = N-acetyl-L-glutamyl 5-phosphate + ADP</text>
        <dbReference type="Rhea" id="RHEA:14629"/>
        <dbReference type="ChEBI" id="CHEBI:30616"/>
        <dbReference type="ChEBI" id="CHEBI:44337"/>
        <dbReference type="ChEBI" id="CHEBI:57936"/>
        <dbReference type="ChEBI" id="CHEBI:456216"/>
        <dbReference type="EC" id="2.7.2.8"/>
    </reaction>
</comment>
<comment type="pathway">
    <text evidence="1">Amino-acid biosynthesis; L-arginine biosynthesis; N(2)-acetyl-L-ornithine from L-glutamate: step 2/4.</text>
</comment>
<comment type="subcellular location">
    <subcellularLocation>
        <location evidence="1">Cytoplasm</location>
    </subcellularLocation>
</comment>
<comment type="similarity">
    <text evidence="1">Belongs to the acetylglutamate kinase family. ArgB subfamily.</text>
</comment>
<proteinExistence type="inferred from homology"/>
<accession>B3DSZ1</accession>
<reference key="1">
    <citation type="journal article" date="2008" name="BMC Genomics">
        <title>Comparative genomic analysis of the gut bacterium Bifidobacterium longum reveals loci susceptible to deletion during pure culture growth.</title>
        <authorList>
            <person name="Lee J.H."/>
            <person name="Karamychev V.N."/>
            <person name="Kozyavkin S.A."/>
            <person name="Mills D."/>
            <person name="Pavlov A.R."/>
            <person name="Pavlova N.V."/>
            <person name="Polouchine N.N."/>
            <person name="Richardson P.M."/>
            <person name="Shakhova V.V."/>
            <person name="Slesarev A.I."/>
            <person name="Weimer B."/>
            <person name="O'Sullivan D.J."/>
        </authorList>
    </citation>
    <scope>NUCLEOTIDE SEQUENCE [LARGE SCALE GENOMIC DNA]</scope>
    <source>
        <strain>DJO10A</strain>
    </source>
</reference>
<sequence length="314" mass="33383">MKGPGFHFDVHTDLRADQKAEVLIEALPWLEEFAGQRIVVKYGGNAMVDDHLKQCFAEDMVFLRQVGLHPIVVHGGGPQISHMLKALGIKSEFKGGLRVTTPEAMDVVRMVLTGKVSRELVGLINAHGPLAVGLSGEDGGLFSAMQRRPIINGKPTDIGLVGDVVSVDASAVEDLVAAGRIPVVSSVAPNEEDATEVLNVNADSAAAALAAAVGAHKLVILTDVDGLYADWPDKNSLIGRIGVETLRDMLPDLESGMRPKMEACVRAIDGGVPQAHIIDGRKPHSILNEIFTSAGIGTMVMPDEGLEMRSSYGY</sequence>
<gene>
    <name evidence="1" type="primary">argB</name>
    <name type="ordered locus">BLD_0814</name>
</gene>
<dbReference type="EC" id="2.7.2.8" evidence="1"/>
<dbReference type="EMBL" id="CP000605">
    <property type="protein sequence ID" value="ACD98260.1"/>
    <property type="molecule type" value="Genomic_DNA"/>
</dbReference>
<dbReference type="SMR" id="B3DSZ1"/>
<dbReference type="KEGG" id="blj:BLD_0814"/>
<dbReference type="HOGENOM" id="CLU_053680_0_0_11"/>
<dbReference type="UniPathway" id="UPA00068">
    <property type="reaction ID" value="UER00107"/>
</dbReference>
<dbReference type="Proteomes" id="UP000002419">
    <property type="component" value="Chromosome"/>
</dbReference>
<dbReference type="GO" id="GO:0005737">
    <property type="term" value="C:cytoplasm"/>
    <property type="evidence" value="ECO:0007669"/>
    <property type="project" value="UniProtKB-SubCell"/>
</dbReference>
<dbReference type="GO" id="GO:0003991">
    <property type="term" value="F:acetylglutamate kinase activity"/>
    <property type="evidence" value="ECO:0007669"/>
    <property type="project" value="UniProtKB-UniRule"/>
</dbReference>
<dbReference type="GO" id="GO:0005524">
    <property type="term" value="F:ATP binding"/>
    <property type="evidence" value="ECO:0007669"/>
    <property type="project" value="UniProtKB-UniRule"/>
</dbReference>
<dbReference type="GO" id="GO:0042450">
    <property type="term" value="P:arginine biosynthetic process via ornithine"/>
    <property type="evidence" value="ECO:0007669"/>
    <property type="project" value="UniProtKB-UniRule"/>
</dbReference>
<dbReference type="GO" id="GO:0006526">
    <property type="term" value="P:L-arginine biosynthetic process"/>
    <property type="evidence" value="ECO:0007669"/>
    <property type="project" value="UniProtKB-UniPathway"/>
</dbReference>
<dbReference type="CDD" id="cd04250">
    <property type="entry name" value="AAK_NAGK-C"/>
    <property type="match status" value="1"/>
</dbReference>
<dbReference type="FunFam" id="3.40.1160.10:FF:000004">
    <property type="entry name" value="Acetylglutamate kinase"/>
    <property type="match status" value="1"/>
</dbReference>
<dbReference type="Gene3D" id="3.40.1160.10">
    <property type="entry name" value="Acetylglutamate kinase-like"/>
    <property type="match status" value="1"/>
</dbReference>
<dbReference type="HAMAP" id="MF_00082">
    <property type="entry name" value="ArgB"/>
    <property type="match status" value="1"/>
</dbReference>
<dbReference type="InterPro" id="IPR036393">
    <property type="entry name" value="AceGlu_kinase-like_sf"/>
</dbReference>
<dbReference type="InterPro" id="IPR004662">
    <property type="entry name" value="AcgluKinase_fam"/>
</dbReference>
<dbReference type="InterPro" id="IPR037528">
    <property type="entry name" value="ArgB"/>
</dbReference>
<dbReference type="InterPro" id="IPR001048">
    <property type="entry name" value="Asp/Glu/Uridylate_kinase"/>
</dbReference>
<dbReference type="InterPro" id="IPR001057">
    <property type="entry name" value="Glu/AcGlu_kinase"/>
</dbReference>
<dbReference type="InterPro" id="IPR041727">
    <property type="entry name" value="NAGK-C"/>
</dbReference>
<dbReference type="NCBIfam" id="TIGR00761">
    <property type="entry name" value="argB"/>
    <property type="match status" value="1"/>
</dbReference>
<dbReference type="PANTHER" id="PTHR23342">
    <property type="entry name" value="N-ACETYLGLUTAMATE SYNTHASE"/>
    <property type="match status" value="1"/>
</dbReference>
<dbReference type="PANTHER" id="PTHR23342:SF0">
    <property type="entry name" value="N-ACETYLGLUTAMATE SYNTHASE, MITOCHONDRIAL"/>
    <property type="match status" value="1"/>
</dbReference>
<dbReference type="Pfam" id="PF00696">
    <property type="entry name" value="AA_kinase"/>
    <property type="match status" value="1"/>
</dbReference>
<dbReference type="PIRSF" id="PIRSF000728">
    <property type="entry name" value="NAGK"/>
    <property type="match status" value="1"/>
</dbReference>
<dbReference type="PRINTS" id="PR00474">
    <property type="entry name" value="GLU5KINASE"/>
</dbReference>
<dbReference type="SUPFAM" id="SSF53633">
    <property type="entry name" value="Carbamate kinase-like"/>
    <property type="match status" value="1"/>
</dbReference>
<organism>
    <name type="scientific">Bifidobacterium longum (strain DJO10A)</name>
    <dbReference type="NCBI Taxonomy" id="205913"/>
    <lineage>
        <taxon>Bacteria</taxon>
        <taxon>Bacillati</taxon>
        <taxon>Actinomycetota</taxon>
        <taxon>Actinomycetes</taxon>
        <taxon>Bifidobacteriales</taxon>
        <taxon>Bifidobacteriaceae</taxon>
        <taxon>Bifidobacterium</taxon>
    </lineage>
</organism>
<protein>
    <recommendedName>
        <fullName evidence="1">Acetylglutamate kinase</fullName>
        <ecNumber evidence="1">2.7.2.8</ecNumber>
    </recommendedName>
    <alternativeName>
        <fullName evidence="1">N-acetyl-L-glutamate 5-phosphotransferase</fullName>
    </alternativeName>
    <alternativeName>
        <fullName evidence="1">NAG kinase</fullName>
        <shortName evidence="1">NAGK</shortName>
    </alternativeName>
</protein>
<feature type="chain" id="PRO_1000118338" description="Acetylglutamate kinase">
    <location>
        <begin position="1"/>
        <end position="314"/>
    </location>
</feature>
<feature type="binding site" evidence="1">
    <location>
        <begin position="76"/>
        <end position="77"/>
    </location>
    <ligand>
        <name>substrate</name>
    </ligand>
</feature>
<feature type="binding site" evidence="1">
    <location>
        <position position="98"/>
    </location>
    <ligand>
        <name>substrate</name>
    </ligand>
</feature>
<feature type="binding site" evidence="1">
    <location>
        <position position="199"/>
    </location>
    <ligand>
        <name>substrate</name>
    </ligand>
</feature>
<feature type="site" description="Transition state stabilizer" evidence="1">
    <location>
        <position position="41"/>
    </location>
</feature>
<feature type="site" description="Transition state stabilizer" evidence="1">
    <location>
        <position position="260"/>
    </location>
</feature>